<keyword id="KW-0131">Cell cycle</keyword>
<keyword id="KW-0132">Cell division</keyword>
<keyword id="KW-0997">Cell inner membrane</keyword>
<keyword id="KW-1003">Cell membrane</keyword>
<keyword id="KW-0472">Membrane</keyword>
<keyword id="KW-1185">Reference proteome</keyword>
<keyword id="KW-0812">Transmembrane</keyword>
<keyword id="KW-1133">Transmembrane helix</keyword>
<dbReference type="EMBL" id="CP000447">
    <property type="protein sequence ID" value="ABI72307.1"/>
    <property type="molecule type" value="Genomic_DNA"/>
</dbReference>
<dbReference type="RefSeq" id="WP_011637916.1">
    <property type="nucleotide sequence ID" value="NC_008345.1"/>
</dbReference>
<dbReference type="SMR" id="Q080K8"/>
<dbReference type="STRING" id="318167.Sfri_2462"/>
<dbReference type="KEGG" id="sfr:Sfri_2462"/>
<dbReference type="eggNOG" id="COG3115">
    <property type="taxonomic scope" value="Bacteria"/>
</dbReference>
<dbReference type="HOGENOM" id="CLU_030174_1_0_6"/>
<dbReference type="OrthoDB" id="7054914at2"/>
<dbReference type="Proteomes" id="UP000000684">
    <property type="component" value="Chromosome"/>
</dbReference>
<dbReference type="GO" id="GO:0032153">
    <property type="term" value="C:cell division site"/>
    <property type="evidence" value="ECO:0007669"/>
    <property type="project" value="UniProtKB-UniRule"/>
</dbReference>
<dbReference type="GO" id="GO:0005886">
    <property type="term" value="C:plasma membrane"/>
    <property type="evidence" value="ECO:0007669"/>
    <property type="project" value="UniProtKB-SubCell"/>
</dbReference>
<dbReference type="GO" id="GO:0000917">
    <property type="term" value="P:division septum assembly"/>
    <property type="evidence" value="ECO:0007669"/>
    <property type="project" value="TreeGrafter"/>
</dbReference>
<dbReference type="GO" id="GO:0043093">
    <property type="term" value="P:FtsZ-dependent cytokinesis"/>
    <property type="evidence" value="ECO:0007669"/>
    <property type="project" value="UniProtKB-UniRule"/>
</dbReference>
<dbReference type="Gene3D" id="3.30.1400.10">
    <property type="entry name" value="ZipA, C-terminal FtsZ-binding domain"/>
    <property type="match status" value="1"/>
</dbReference>
<dbReference type="HAMAP" id="MF_00509">
    <property type="entry name" value="ZipA"/>
    <property type="match status" value="1"/>
</dbReference>
<dbReference type="InterPro" id="IPR011919">
    <property type="entry name" value="Cell_div_ZipA"/>
</dbReference>
<dbReference type="InterPro" id="IPR007449">
    <property type="entry name" value="ZipA_FtsZ-bd_C"/>
</dbReference>
<dbReference type="InterPro" id="IPR036765">
    <property type="entry name" value="ZipA_FtsZ-bd_C_sf"/>
</dbReference>
<dbReference type="NCBIfam" id="TIGR02205">
    <property type="entry name" value="septum_zipA"/>
    <property type="match status" value="1"/>
</dbReference>
<dbReference type="PANTHER" id="PTHR38685">
    <property type="entry name" value="CELL DIVISION PROTEIN ZIPA"/>
    <property type="match status" value="1"/>
</dbReference>
<dbReference type="PANTHER" id="PTHR38685:SF1">
    <property type="entry name" value="CELL DIVISION PROTEIN ZIPA"/>
    <property type="match status" value="1"/>
</dbReference>
<dbReference type="Pfam" id="PF04354">
    <property type="entry name" value="ZipA_C"/>
    <property type="match status" value="1"/>
</dbReference>
<dbReference type="SMART" id="SM00771">
    <property type="entry name" value="ZipA_C"/>
    <property type="match status" value="1"/>
</dbReference>
<dbReference type="SUPFAM" id="SSF64383">
    <property type="entry name" value="Cell-division protein ZipA, C-terminal domain"/>
    <property type="match status" value="1"/>
</dbReference>
<accession>Q080K8</accession>
<name>ZIPA_SHEFN</name>
<gene>
    <name evidence="1" type="primary">zipA</name>
    <name type="ordered locus">Sfri_2462</name>
</gene>
<proteinExistence type="inferred from homology"/>
<sequence length="352" mass="38620">MKDLQLVLFVLGAIAIIAVLVHGFWSIRKQQPKSMKQSPMAGFYKDQAKRRDSEGFDADGIGQVRVRKPGEVEETVIKPVLKTNLSQKPHSGTTKLTDTPLQDSLRQPGPHKTEPEHVEPKVVQPAQQSLFVGDDVKPAPTASTSMNTPKKIFNPSTSTAKLESYTGKPVAARPEPIKPPIQPAAPKVDVKAEVEEVKAEVEVKSTLKADAPVNEPVEPTDVLVLHIFAKAGEQIQGAELLPSLLSLNFKFGDMDIFHRHIDNAGTGKVLFSLANMLKPGIFDPDNMEQFVTQGVVLFMTLPGYGDPLMNFTIMLNSAYQIAEDLGAELLDGQRQPWSDATKKDYLRRLNAA</sequence>
<reference key="1">
    <citation type="submission" date="2006-08" db="EMBL/GenBank/DDBJ databases">
        <title>Complete sequence of Shewanella frigidimarina NCIMB 400.</title>
        <authorList>
            <consortium name="US DOE Joint Genome Institute"/>
            <person name="Copeland A."/>
            <person name="Lucas S."/>
            <person name="Lapidus A."/>
            <person name="Barry K."/>
            <person name="Detter J.C."/>
            <person name="Glavina del Rio T."/>
            <person name="Hammon N."/>
            <person name="Israni S."/>
            <person name="Dalin E."/>
            <person name="Tice H."/>
            <person name="Pitluck S."/>
            <person name="Fredrickson J.K."/>
            <person name="Kolker E."/>
            <person name="McCuel L.A."/>
            <person name="DiChristina T."/>
            <person name="Nealson K.H."/>
            <person name="Newman D."/>
            <person name="Tiedje J.M."/>
            <person name="Zhou J."/>
            <person name="Romine M.F."/>
            <person name="Culley D.E."/>
            <person name="Serres M."/>
            <person name="Chertkov O."/>
            <person name="Brettin T."/>
            <person name="Bruce D."/>
            <person name="Han C."/>
            <person name="Tapia R."/>
            <person name="Gilna P."/>
            <person name="Schmutz J."/>
            <person name="Larimer F."/>
            <person name="Land M."/>
            <person name="Hauser L."/>
            <person name="Kyrpides N."/>
            <person name="Mikhailova N."/>
            <person name="Richardson P."/>
        </authorList>
    </citation>
    <scope>NUCLEOTIDE SEQUENCE [LARGE SCALE GENOMIC DNA]</scope>
    <source>
        <strain>NCIMB 400</strain>
    </source>
</reference>
<comment type="function">
    <text evidence="1">Essential cell division protein that stabilizes the FtsZ protofilaments by cross-linking them and that serves as a cytoplasmic membrane anchor for the Z ring. Also required for the recruitment to the septal ring of downstream cell division proteins.</text>
</comment>
<comment type="subunit">
    <text evidence="1">Interacts with FtsZ via their C-terminal domains.</text>
</comment>
<comment type="subcellular location">
    <subcellularLocation>
        <location evidence="1">Cell inner membrane</location>
        <topology evidence="1">Single-pass type I membrane protein</topology>
    </subcellularLocation>
    <text evidence="1">Localizes to the Z ring in an FtsZ-dependent manner.</text>
</comment>
<comment type="similarity">
    <text evidence="1">Belongs to the ZipA family.</text>
</comment>
<feature type="chain" id="PRO_1000015155" description="Cell division protein ZipA">
    <location>
        <begin position="1"/>
        <end position="352"/>
    </location>
</feature>
<feature type="topological domain" description="Periplasmic" evidence="1">
    <location>
        <begin position="1"/>
        <end position="6"/>
    </location>
</feature>
<feature type="transmembrane region" description="Helical" evidence="1">
    <location>
        <begin position="7"/>
        <end position="27"/>
    </location>
</feature>
<feature type="topological domain" description="Cytoplasmic" evidence="1">
    <location>
        <begin position="28"/>
        <end position="352"/>
    </location>
</feature>
<feature type="region of interest" description="Disordered" evidence="2">
    <location>
        <begin position="78"/>
        <end position="120"/>
    </location>
</feature>
<feature type="region of interest" description="Disordered" evidence="2">
    <location>
        <begin position="138"/>
        <end position="160"/>
    </location>
</feature>
<feature type="compositionally biased region" description="Polar residues" evidence="2">
    <location>
        <begin position="83"/>
        <end position="105"/>
    </location>
</feature>
<feature type="compositionally biased region" description="Basic and acidic residues" evidence="2">
    <location>
        <begin position="111"/>
        <end position="120"/>
    </location>
</feature>
<feature type="compositionally biased region" description="Polar residues" evidence="2">
    <location>
        <begin position="141"/>
        <end position="160"/>
    </location>
</feature>
<organism>
    <name type="scientific">Shewanella frigidimarina (strain NCIMB 400)</name>
    <dbReference type="NCBI Taxonomy" id="318167"/>
    <lineage>
        <taxon>Bacteria</taxon>
        <taxon>Pseudomonadati</taxon>
        <taxon>Pseudomonadota</taxon>
        <taxon>Gammaproteobacteria</taxon>
        <taxon>Alteromonadales</taxon>
        <taxon>Shewanellaceae</taxon>
        <taxon>Shewanella</taxon>
    </lineage>
</organism>
<evidence type="ECO:0000255" key="1">
    <source>
        <dbReference type="HAMAP-Rule" id="MF_00509"/>
    </source>
</evidence>
<evidence type="ECO:0000256" key="2">
    <source>
        <dbReference type="SAM" id="MobiDB-lite"/>
    </source>
</evidence>
<protein>
    <recommendedName>
        <fullName evidence="1">Cell division protein ZipA</fullName>
    </recommendedName>
</protein>